<dbReference type="GO" id="GO:0005576">
    <property type="term" value="C:extracellular region"/>
    <property type="evidence" value="ECO:0007669"/>
    <property type="project" value="UniProtKB-SubCell"/>
</dbReference>
<dbReference type="GO" id="GO:0019871">
    <property type="term" value="F:sodium channel inhibitor activity"/>
    <property type="evidence" value="ECO:0007669"/>
    <property type="project" value="InterPro"/>
</dbReference>
<dbReference type="GO" id="GO:0090729">
    <property type="term" value="F:toxin activity"/>
    <property type="evidence" value="ECO:0007669"/>
    <property type="project" value="UniProtKB-KW"/>
</dbReference>
<dbReference type="GO" id="GO:0042742">
    <property type="term" value="P:defense response to bacterium"/>
    <property type="evidence" value="ECO:0007669"/>
    <property type="project" value="UniProtKB-KW"/>
</dbReference>
<dbReference type="InterPro" id="IPR044062">
    <property type="entry name" value="LCN-type_CS_alpha_beta_dom"/>
</dbReference>
<dbReference type="InterPro" id="IPR002061">
    <property type="entry name" value="Scorpion_toxinL/defensin"/>
</dbReference>
<dbReference type="Pfam" id="PF00537">
    <property type="entry name" value="Toxin_3"/>
    <property type="match status" value="1"/>
</dbReference>
<dbReference type="PROSITE" id="PS51863">
    <property type="entry name" value="LCN_CSAB"/>
    <property type="match status" value="1"/>
</dbReference>
<proteinExistence type="evidence at protein level"/>
<sequence length="19" mass="2149">ARDGYIVDEKGCKFACFIN</sequence>
<accession>P0DTB8</accession>
<keyword id="KW-0044">Antibiotic</keyword>
<keyword id="KW-0929">Antimicrobial</keyword>
<keyword id="KW-0903">Direct protein sequencing</keyword>
<keyword id="KW-1015">Disulfide bond</keyword>
<keyword id="KW-0872">Ion channel impairing toxin</keyword>
<keyword id="KW-0528">Neurotoxin</keyword>
<keyword id="KW-0964">Secreted</keyword>
<keyword id="KW-0800">Toxin</keyword>
<keyword id="KW-0738">Voltage-gated sodium channel impairing toxin</keyword>
<evidence type="ECO:0000250" key="1">
    <source>
        <dbReference type="UniProtKB" id="P58296"/>
    </source>
</evidence>
<evidence type="ECO:0000269" key="2">
    <source>
    </source>
</evidence>
<evidence type="ECO:0000303" key="3">
    <source>
    </source>
</evidence>
<evidence type="ECO:0000305" key="4"/>
<evidence type="ECO:0000305" key="5">
    <source>
    </source>
</evidence>
<protein>
    <recommendedName>
        <fullName evidence="3">Toxin Cm38</fullName>
    </recommendedName>
</protein>
<comment type="function">
    <text evidence="1 2">May block sodium channels (Nav) found (By similarity). Reversibly modifies the firing of DRG neurons by causing membrane depolarization and increasing the number of action potentials (PubMed:25633390). Shows antimicrobial activity against the Gram-negative bacteria K.pneumoniae (MIC=64 uM), and only a very weak activity against S.aureus (PubMed:25633390). Does not show hemolytic activity (PubMed:25633390).</text>
</comment>
<comment type="subcellular location">
    <subcellularLocation>
        <location evidence="2">Secreted</location>
    </subcellularLocation>
</comment>
<comment type="tissue specificity">
    <text evidence="5">Expressed by the venom gland.</text>
</comment>
<comment type="domain">
    <text evidence="4">Has the structural arrangement of an alpha-helix connected to antiparallel beta-sheets by disulfide bonds (CS-alpha/beta).</text>
</comment>
<comment type="mass spectrometry" mass="6800.31" method="MALDI" evidence="2"/>
<comment type="similarity">
    <text evidence="4">Belongs to the long (4 C-C) scorpion toxin superfamily. Sodium channel inhibitor family.</text>
</comment>
<organism>
    <name type="scientific">Centruroides margaritatus</name>
    <name type="common">Central American bark Scorpion</name>
    <dbReference type="NCBI Taxonomy" id="29018"/>
    <lineage>
        <taxon>Eukaryota</taxon>
        <taxon>Metazoa</taxon>
        <taxon>Ecdysozoa</taxon>
        <taxon>Arthropoda</taxon>
        <taxon>Chelicerata</taxon>
        <taxon>Arachnida</taxon>
        <taxon>Scorpiones</taxon>
        <taxon>Buthida</taxon>
        <taxon>Buthoidea</taxon>
        <taxon>Buthidae</taxon>
        <taxon>Centruroides</taxon>
    </lineage>
</organism>
<name>SCX38_CENMA</name>
<reference key="1">
    <citation type="journal article" date="2015" name="Protein Pept. Lett.">
        <title>Cm38: a new antimicrobial peptide active against Klebsiella pneumoniae is homologous to Cn11.</title>
        <authorList>
            <person name="Duenas-Cuellar R.A."/>
            <person name="Kushmerick C."/>
            <person name="Naves L.A."/>
            <person name="Batista I.F."/>
            <person name="Guerrero-Vargas J.A."/>
            <person name="Pires O.R. Jr."/>
            <person name="Fontes W."/>
            <person name="Castro M.S."/>
        </authorList>
    </citation>
    <scope>PROTEIN SEQUENCE</scope>
    <scope>FUNCTION</scope>
    <scope>SUBCELLULAR LOCATION</scope>
    <scope>MASS SPECTROMETRY</scope>
    <source>
        <tissue>Venom</tissue>
    </source>
</reference>
<feature type="chain" id="PRO_0000449319" description="Toxin Cm38">
    <location>
        <begin position="1"/>
        <end position="19" status="greater than"/>
    </location>
</feature>
<feature type="disulfide bond" evidence="4">
    <location>
        <begin position="12"/>
        <end status="unknown"/>
    </location>
</feature>
<feature type="disulfide bond" evidence="4">
    <location>
        <begin position="16"/>
        <end status="unknown"/>
    </location>
</feature>
<feature type="non-terminal residue">
    <location>
        <position position="19"/>
    </location>
</feature>